<protein>
    <recommendedName>
        <fullName evidence="2">Small cysteine and glycine repeat-containing protein 2</fullName>
    </recommendedName>
    <alternativeName>
        <fullName evidence="1">Keratin-associated protein 28-2</fullName>
    </alternativeName>
</protein>
<accession>A0A286YFB4</accession>
<comment type="function">
    <text evidence="2">In the hair cortex, hair keratin intermediate filaments are embedded in an interfilamentous matrix, consisting of hair keratin-associated proteins (KRTAP), which are essential for the formation of a rigid and resistant hair shaft through their extensive disulfide bond cross-linking with abundant cysteine residues of hair keratins. The matrix proteins include the high-sulfur and high-glycine-tyrosine keratins.</text>
</comment>
<comment type="miscellaneous">
    <text evidence="1">Human have a similar number of genes as other primates despite the relative hairlessness of humans.</text>
</comment>
<comment type="similarity">
    <text evidence="3">Belongs to the KRTAP type 28 family.</text>
</comment>
<sequence length="120" mass="10822">MGCCGCGGCGGCGGRCGGCGGGCGGGCGGGCGGGCGGGCGGGCGGGCGGGCGGSCGSCTTCRCYRVGCCSSCCPCCRGCCGGCCSTPVICCCRRTCHSCGCGCGKGCCQQKCCCQKQCCC</sequence>
<proteinExistence type="evidence at protein level"/>
<evidence type="ECO:0000303" key="1">
    <source>
    </source>
</evidence>
<evidence type="ECO:0000305" key="2"/>
<evidence type="ECO:0000305" key="3">
    <source>
    </source>
</evidence>
<evidence type="ECO:0000312" key="4">
    <source>
        <dbReference type="HGNC" id="HGNC:34220"/>
    </source>
</evidence>
<organism>
    <name type="scientific">Homo sapiens</name>
    <name type="common">Human</name>
    <dbReference type="NCBI Taxonomy" id="9606"/>
    <lineage>
        <taxon>Eukaryota</taxon>
        <taxon>Metazoa</taxon>
        <taxon>Chordata</taxon>
        <taxon>Craniata</taxon>
        <taxon>Vertebrata</taxon>
        <taxon>Euteleostomi</taxon>
        <taxon>Mammalia</taxon>
        <taxon>Eutheria</taxon>
        <taxon>Euarchontoglires</taxon>
        <taxon>Primates</taxon>
        <taxon>Haplorrhini</taxon>
        <taxon>Catarrhini</taxon>
        <taxon>Hominidae</taxon>
        <taxon>Homo</taxon>
    </lineage>
</organism>
<dbReference type="EMBL" id="AC064853">
    <property type="status" value="NOT_ANNOTATED_CDS"/>
    <property type="molecule type" value="Genomic_DNA"/>
</dbReference>
<dbReference type="CCDS" id="CCDS92953.1"/>
<dbReference type="RefSeq" id="NP_001382332.1">
    <property type="nucleotide sequence ID" value="NM_001395403.1"/>
</dbReference>
<dbReference type="BioMuta" id="ENSG00000284643"/>
<dbReference type="MassIVE" id="A0A286YFB4"/>
<dbReference type="PeptideAtlas" id="A0A286YFB4"/>
<dbReference type="Ensembl" id="ENST00000641394.1">
    <property type="protein sequence ID" value="ENSP00000493300.1"/>
    <property type="gene ID" value="ENSG00000284643.1"/>
</dbReference>
<dbReference type="GeneID" id="112441435"/>
<dbReference type="MANE-Select" id="ENST00000641394.1">
    <property type="protein sequence ID" value="ENSP00000493300.1"/>
    <property type="RefSeq nucleotide sequence ID" value="NM_001395403.1"/>
    <property type="RefSeq protein sequence ID" value="NP_001382332.1"/>
</dbReference>
<dbReference type="AGR" id="HGNC:34220"/>
<dbReference type="GeneCards" id="SCYGR2"/>
<dbReference type="HGNC" id="HGNC:34220">
    <property type="gene designation" value="SCYGR2"/>
</dbReference>
<dbReference type="HPA" id="ENSG00000284643">
    <property type="expression patterns" value="Not detected"/>
</dbReference>
<dbReference type="neXtProt" id="NX_A0A286YFB4"/>
<dbReference type="VEuPathDB" id="HostDB:ENSG00000284643"/>
<dbReference type="GeneTree" id="ENSGT00950000183469"/>
<dbReference type="InParanoid" id="A0A286YFB4"/>
<dbReference type="OMA" id="CGCGKGY"/>
<dbReference type="PAN-GO" id="A0A286YFB4">
    <property type="GO annotations" value="0 GO annotations based on evolutionary models"/>
</dbReference>
<dbReference type="Pharos" id="A0A286YFB4">
    <property type="development level" value="Tdark"/>
</dbReference>
<dbReference type="PRO" id="PR:A0A286YFB4"/>
<dbReference type="Proteomes" id="UP000005640">
    <property type="component" value="Chromosome 2"/>
</dbReference>
<dbReference type="Bgee" id="ENSG00000284643">
    <property type="expression patterns" value="Expressed in skin of abdomen and 6 other cell types or tissues"/>
</dbReference>
<dbReference type="GO" id="GO:0005882">
    <property type="term" value="C:intermediate filament"/>
    <property type="evidence" value="ECO:0007669"/>
    <property type="project" value="UniProtKB-KW"/>
</dbReference>
<keyword id="KW-0416">Keratin</keyword>
<keyword id="KW-1267">Proteomics identification</keyword>
<keyword id="KW-1185">Reference proteome</keyword>
<keyword id="KW-0677">Repeat</keyword>
<name>SCGR2_HUMAN</name>
<feature type="chain" id="PRO_0000445142" description="Small cysteine and glycine repeat-containing protein 2">
    <location>
        <begin position="1"/>
        <end position="120"/>
    </location>
</feature>
<feature type="region of interest" description="19 X 2 AA repeats of CG">
    <location>
        <begin position="4"/>
        <end position="104"/>
    </location>
</feature>
<reference key="1">
    <citation type="journal article" date="2005" name="Nature">
        <title>Generation and annotation of the DNA sequences of human chromosomes 2 and 4.</title>
        <authorList>
            <person name="Hillier L.W."/>
            <person name="Graves T.A."/>
            <person name="Fulton R.S."/>
            <person name="Fulton L.A."/>
            <person name="Pepin K.H."/>
            <person name="Minx P."/>
            <person name="Wagner-McPherson C."/>
            <person name="Layman D."/>
            <person name="Wylie K."/>
            <person name="Sekhon M."/>
            <person name="Becker M.C."/>
            <person name="Fewell G.A."/>
            <person name="Delehaunty K.D."/>
            <person name="Miner T.L."/>
            <person name="Nash W.E."/>
            <person name="Kremitzki C."/>
            <person name="Oddy L."/>
            <person name="Du H."/>
            <person name="Sun H."/>
            <person name="Bradshaw-Cordum H."/>
            <person name="Ali J."/>
            <person name="Carter J."/>
            <person name="Cordes M."/>
            <person name="Harris A."/>
            <person name="Isak A."/>
            <person name="van Brunt A."/>
            <person name="Nguyen C."/>
            <person name="Du F."/>
            <person name="Courtney L."/>
            <person name="Kalicki J."/>
            <person name="Ozersky P."/>
            <person name="Abbott S."/>
            <person name="Armstrong J."/>
            <person name="Belter E.A."/>
            <person name="Caruso L."/>
            <person name="Cedroni M."/>
            <person name="Cotton M."/>
            <person name="Davidson T."/>
            <person name="Desai A."/>
            <person name="Elliott G."/>
            <person name="Erb T."/>
            <person name="Fronick C."/>
            <person name="Gaige T."/>
            <person name="Haakenson W."/>
            <person name="Haglund K."/>
            <person name="Holmes A."/>
            <person name="Harkins R."/>
            <person name="Kim K."/>
            <person name="Kruchowski S.S."/>
            <person name="Strong C.M."/>
            <person name="Grewal N."/>
            <person name="Goyea E."/>
            <person name="Hou S."/>
            <person name="Levy A."/>
            <person name="Martinka S."/>
            <person name="Mead K."/>
            <person name="McLellan M.D."/>
            <person name="Meyer R."/>
            <person name="Randall-Maher J."/>
            <person name="Tomlinson C."/>
            <person name="Dauphin-Kohlberg S."/>
            <person name="Kozlowicz-Reilly A."/>
            <person name="Shah N."/>
            <person name="Swearengen-Shahid S."/>
            <person name="Snider J."/>
            <person name="Strong J.T."/>
            <person name="Thompson J."/>
            <person name="Yoakum M."/>
            <person name="Leonard S."/>
            <person name="Pearman C."/>
            <person name="Trani L."/>
            <person name="Radionenko M."/>
            <person name="Waligorski J.E."/>
            <person name="Wang C."/>
            <person name="Rock S.M."/>
            <person name="Tin-Wollam A.-M."/>
            <person name="Maupin R."/>
            <person name="Latreille P."/>
            <person name="Wendl M.C."/>
            <person name="Yang S.-P."/>
            <person name="Pohl C."/>
            <person name="Wallis J.W."/>
            <person name="Spieth J."/>
            <person name="Bieri T.A."/>
            <person name="Berkowicz N."/>
            <person name="Nelson J.O."/>
            <person name="Osborne J."/>
            <person name="Ding L."/>
            <person name="Meyer R."/>
            <person name="Sabo A."/>
            <person name="Shotland Y."/>
            <person name="Sinha P."/>
            <person name="Wohldmann P.E."/>
            <person name="Cook L.L."/>
            <person name="Hickenbotham M.T."/>
            <person name="Eldred J."/>
            <person name="Williams D."/>
            <person name="Jones T.A."/>
            <person name="She X."/>
            <person name="Ciccarelli F.D."/>
            <person name="Izaurralde E."/>
            <person name="Taylor J."/>
            <person name="Schmutz J."/>
            <person name="Myers R.M."/>
            <person name="Cox D.R."/>
            <person name="Huang X."/>
            <person name="McPherson J.D."/>
            <person name="Mardis E.R."/>
            <person name="Clifton S.W."/>
            <person name="Warren W.C."/>
            <person name="Chinwalla A.T."/>
            <person name="Eddy S.R."/>
            <person name="Marra M.A."/>
            <person name="Ovcharenko I."/>
            <person name="Furey T.S."/>
            <person name="Miller W."/>
            <person name="Eichler E.E."/>
            <person name="Bork P."/>
            <person name="Suyama M."/>
            <person name="Torrents D."/>
            <person name="Waterston R.H."/>
            <person name="Wilson R.K."/>
        </authorList>
    </citation>
    <scope>NUCLEOTIDE SEQUENCE [LARGE SCALE GENOMIC DNA]</scope>
</reference>
<reference key="2">
    <citation type="journal article" date="2008" name="BMC Evol. Biol.">
        <title>Molecular evolution of the keratin associated protein gene family in mammals, role in the evolution of mammalian hair.</title>
        <authorList>
            <person name="Wu D.D."/>
            <person name="Irwin D.M."/>
            <person name="Zhang Y.P."/>
        </authorList>
    </citation>
    <scope>FAMILY CHARACTERIZATION</scope>
</reference>
<gene>
    <name evidence="4" type="primary">SCYGR2</name>
    <name evidence="1" type="synonym">KRTAP28-2</name>
</gene>